<keyword id="KW-0007">Acetylation</keyword>
<keyword id="KW-0158">Chromosome</keyword>
<keyword id="KW-0238">DNA-binding</keyword>
<keyword id="KW-1017">Isopeptide bond</keyword>
<keyword id="KW-0488">Methylation</keyword>
<keyword id="KW-0544">Nucleosome core</keyword>
<keyword id="KW-0539">Nucleus</keyword>
<keyword id="KW-0597">Phosphoprotein</keyword>
<keyword id="KW-0832">Ubl conjugation</keyword>
<sequence>MSGRGKGAKSKSKAKSRSSRAGLQFPVGRVHRFLRKGNYANRVGAGAPVYLAAVLEYLTAEILELAGNAARDNKKSRIIPRHLQLAVRNDEELNKLLGGVTIAQGGVLPNIQAVLLPKKK</sequence>
<organism>
    <name type="scientific">Psammechinus miliaris</name>
    <name type="common">Green sea urchin</name>
    <name type="synonym">Echinus miliaris</name>
    <dbReference type="NCBI Taxonomy" id="7660"/>
    <lineage>
        <taxon>Eukaryota</taxon>
        <taxon>Metazoa</taxon>
        <taxon>Echinodermata</taxon>
        <taxon>Eleutherozoa</taxon>
        <taxon>Echinozoa</taxon>
        <taxon>Echinoidea</taxon>
        <taxon>Euechinoidea</taxon>
        <taxon>Echinacea</taxon>
        <taxon>Camarodonta</taxon>
        <taxon>Echinidea</taxon>
        <taxon>Parechinidae</taxon>
        <taxon>Psammechinus</taxon>
    </lineage>
</organism>
<feature type="initiator methionine" description="Removed" evidence="1">
    <location>
        <position position="1"/>
    </location>
</feature>
<feature type="chain" id="PRO_0000055273" description="Late histone H2A.2.2">
    <location>
        <begin position="2"/>
        <end position="120"/>
    </location>
</feature>
<feature type="region of interest" description="Disordered" evidence="2">
    <location>
        <begin position="1"/>
        <end position="22"/>
    </location>
</feature>
<feature type="compositionally biased region" description="Basic residues" evidence="2">
    <location>
        <begin position="1"/>
        <end position="18"/>
    </location>
</feature>
<feature type="modified residue" description="N-acetylserine" evidence="1">
    <location>
        <position position="2"/>
    </location>
</feature>
<feature type="modified residue" description="Phosphoserine" evidence="1">
    <location>
        <position position="2"/>
    </location>
</feature>
<feature type="modified residue" description="N5-methylglutamine" evidence="1">
    <location>
        <position position="104"/>
    </location>
</feature>
<feature type="cross-link" description="Glycyl lysine isopeptide (Lys-Gly) (interchain with G-Cter in ubiquitin)" evidence="1">
    <location>
        <position position="119"/>
    </location>
</feature>
<name>H2A4_PSAMI</name>
<reference key="1">
    <citation type="journal article" date="1986" name="Mol. Cell. Biol.">
        <title>Characterization of two nonallelic pairs of late histone H2A and H2B genes of the sea urchin: differential regulation in the embryo and tissue-specific expression in the adult.</title>
        <authorList>
            <person name="Kemler I."/>
            <person name="Busslinger M."/>
        </authorList>
    </citation>
    <scope>NUCLEOTIDE SEQUENCE [GENOMIC DNA]</scope>
</reference>
<dbReference type="EMBL" id="M14141">
    <property type="protein sequence ID" value="AAA30014.1"/>
    <property type="molecule type" value="Genomic_DNA"/>
</dbReference>
<dbReference type="SMR" id="P07793"/>
<dbReference type="GO" id="GO:0000786">
    <property type="term" value="C:nucleosome"/>
    <property type="evidence" value="ECO:0007669"/>
    <property type="project" value="UniProtKB-KW"/>
</dbReference>
<dbReference type="GO" id="GO:0005634">
    <property type="term" value="C:nucleus"/>
    <property type="evidence" value="ECO:0007669"/>
    <property type="project" value="UniProtKB-SubCell"/>
</dbReference>
<dbReference type="GO" id="GO:0003677">
    <property type="term" value="F:DNA binding"/>
    <property type="evidence" value="ECO:0007669"/>
    <property type="project" value="UniProtKB-KW"/>
</dbReference>
<dbReference type="GO" id="GO:0046982">
    <property type="term" value="F:protein heterodimerization activity"/>
    <property type="evidence" value="ECO:0007669"/>
    <property type="project" value="InterPro"/>
</dbReference>
<dbReference type="GO" id="GO:0030527">
    <property type="term" value="F:structural constituent of chromatin"/>
    <property type="evidence" value="ECO:0007669"/>
    <property type="project" value="InterPro"/>
</dbReference>
<dbReference type="CDD" id="cd00074">
    <property type="entry name" value="HFD_H2A"/>
    <property type="match status" value="1"/>
</dbReference>
<dbReference type="FunFam" id="1.10.20.10:FF:000020">
    <property type="entry name" value="Histone H2A"/>
    <property type="match status" value="1"/>
</dbReference>
<dbReference type="Gene3D" id="1.10.20.10">
    <property type="entry name" value="Histone, subunit A"/>
    <property type="match status" value="1"/>
</dbReference>
<dbReference type="InterPro" id="IPR009072">
    <property type="entry name" value="Histone-fold"/>
</dbReference>
<dbReference type="InterPro" id="IPR002119">
    <property type="entry name" value="Histone_H2A"/>
</dbReference>
<dbReference type="InterPro" id="IPR007125">
    <property type="entry name" value="Histone_H2A/H2B/H3"/>
</dbReference>
<dbReference type="InterPro" id="IPR032454">
    <property type="entry name" value="Histone_H2A_C"/>
</dbReference>
<dbReference type="InterPro" id="IPR032458">
    <property type="entry name" value="Histone_H2A_CS"/>
</dbReference>
<dbReference type="PANTHER" id="PTHR23430">
    <property type="entry name" value="HISTONE H2A"/>
    <property type="match status" value="1"/>
</dbReference>
<dbReference type="Pfam" id="PF00125">
    <property type="entry name" value="Histone"/>
    <property type="match status" value="1"/>
</dbReference>
<dbReference type="Pfam" id="PF16211">
    <property type="entry name" value="Histone_H2A_C"/>
    <property type="match status" value="1"/>
</dbReference>
<dbReference type="PRINTS" id="PR00620">
    <property type="entry name" value="HISTONEH2A"/>
</dbReference>
<dbReference type="SMART" id="SM00414">
    <property type="entry name" value="H2A"/>
    <property type="match status" value="1"/>
</dbReference>
<dbReference type="SUPFAM" id="SSF47113">
    <property type="entry name" value="Histone-fold"/>
    <property type="match status" value="1"/>
</dbReference>
<dbReference type="PROSITE" id="PS00046">
    <property type="entry name" value="HISTONE_H2A"/>
    <property type="match status" value="1"/>
</dbReference>
<evidence type="ECO:0000250" key="1"/>
<evidence type="ECO:0000256" key="2">
    <source>
        <dbReference type="SAM" id="MobiDB-lite"/>
    </source>
</evidence>
<evidence type="ECO:0000305" key="3"/>
<accession>P07793</accession>
<protein>
    <recommendedName>
        <fullName>Late histone H2A.2.2</fullName>
    </recommendedName>
</protein>
<comment type="function">
    <text>Core component of nucleosome. Nucleosomes wrap and compact DNA into chromatin, limiting DNA accessibility to the cellular machineries which require DNA as a template. Histones thereby play a central role in transcription regulation, DNA repair, DNA replication and chromosomal stability. DNA accessibility is regulated via a complex set of post-translational modifications of histones, also called histone code, and nucleosome remodeling.</text>
</comment>
<comment type="subunit">
    <text>The nucleosome is a histone octamer containing two molecules each of H2A, H2B, H3 and H4 assembled in one H3-H4 heterotetramer and two H2A-H2B heterodimers. The octamer wraps approximately 147 bp of DNA.</text>
</comment>
<comment type="subcellular location">
    <subcellularLocation>
        <location>Nucleus</location>
    </subcellularLocation>
    <subcellularLocation>
        <location>Chromosome</location>
    </subcellularLocation>
</comment>
<comment type="PTM">
    <text evidence="1">Monoubiquitination of Lys-119 gives a specific tag for epigenetic transcriptional repression.</text>
</comment>
<comment type="PTM">
    <text evidence="1">Phosphorylation of Ser-2 directly represses transcription.</text>
</comment>
<comment type="similarity">
    <text evidence="3">Belongs to the histone H2A family.</text>
</comment>
<proteinExistence type="inferred from homology"/>